<proteinExistence type="inferred from homology"/>
<dbReference type="EC" id="3.4.21.-"/>
<dbReference type="EMBL" id="AY437855">
    <property type="protein sequence ID" value="AAS45669.1"/>
    <property type="molecule type" value="Genomic_DNA"/>
</dbReference>
<dbReference type="SMR" id="Q64K33"/>
<dbReference type="MEROPS" id="S08.115"/>
<dbReference type="GlyCosmos" id="Q64K33">
    <property type="glycosylation" value="4 sites, No reported glycans"/>
</dbReference>
<dbReference type="GO" id="GO:0005576">
    <property type="term" value="C:extracellular region"/>
    <property type="evidence" value="ECO:0007669"/>
    <property type="project" value="UniProtKB-SubCell"/>
</dbReference>
<dbReference type="GO" id="GO:0004252">
    <property type="term" value="F:serine-type endopeptidase activity"/>
    <property type="evidence" value="ECO:0007669"/>
    <property type="project" value="InterPro"/>
</dbReference>
<dbReference type="GO" id="GO:0006508">
    <property type="term" value="P:proteolysis"/>
    <property type="evidence" value="ECO:0007669"/>
    <property type="project" value="UniProtKB-KW"/>
</dbReference>
<dbReference type="CDD" id="cd04077">
    <property type="entry name" value="Peptidases_S8_PCSK9_ProteinaseK_like"/>
    <property type="match status" value="1"/>
</dbReference>
<dbReference type="FunFam" id="3.40.50.200:FF:000014">
    <property type="entry name" value="Proteinase K"/>
    <property type="match status" value="1"/>
</dbReference>
<dbReference type="Gene3D" id="3.30.70.80">
    <property type="entry name" value="Peptidase S8 propeptide/proteinase inhibitor I9"/>
    <property type="match status" value="1"/>
</dbReference>
<dbReference type="Gene3D" id="3.40.50.200">
    <property type="entry name" value="Peptidase S8/S53 domain"/>
    <property type="match status" value="1"/>
</dbReference>
<dbReference type="InterPro" id="IPR034193">
    <property type="entry name" value="PCSK9_ProteinaseK-like"/>
</dbReference>
<dbReference type="InterPro" id="IPR000209">
    <property type="entry name" value="Peptidase_S8/S53_dom"/>
</dbReference>
<dbReference type="InterPro" id="IPR036852">
    <property type="entry name" value="Peptidase_S8/S53_dom_sf"/>
</dbReference>
<dbReference type="InterPro" id="IPR023828">
    <property type="entry name" value="Peptidase_S8_Ser-AS"/>
</dbReference>
<dbReference type="InterPro" id="IPR050131">
    <property type="entry name" value="Peptidase_S8_subtilisin-like"/>
</dbReference>
<dbReference type="InterPro" id="IPR015500">
    <property type="entry name" value="Peptidase_S8_subtilisin-rel"/>
</dbReference>
<dbReference type="InterPro" id="IPR010259">
    <property type="entry name" value="S8pro/Inhibitor_I9"/>
</dbReference>
<dbReference type="InterPro" id="IPR037045">
    <property type="entry name" value="S8pro/Inhibitor_I9_sf"/>
</dbReference>
<dbReference type="PANTHER" id="PTHR43806:SF11">
    <property type="entry name" value="CEREVISIN-RELATED"/>
    <property type="match status" value="1"/>
</dbReference>
<dbReference type="PANTHER" id="PTHR43806">
    <property type="entry name" value="PEPTIDASE S8"/>
    <property type="match status" value="1"/>
</dbReference>
<dbReference type="Pfam" id="PF05922">
    <property type="entry name" value="Inhibitor_I9"/>
    <property type="match status" value="1"/>
</dbReference>
<dbReference type="Pfam" id="PF00082">
    <property type="entry name" value="Peptidase_S8"/>
    <property type="match status" value="1"/>
</dbReference>
<dbReference type="PRINTS" id="PR00723">
    <property type="entry name" value="SUBTILISIN"/>
</dbReference>
<dbReference type="SUPFAM" id="SSF54897">
    <property type="entry name" value="Protease propeptides/inhibitors"/>
    <property type="match status" value="1"/>
</dbReference>
<dbReference type="SUPFAM" id="SSF52743">
    <property type="entry name" value="Subtilisin-like"/>
    <property type="match status" value="1"/>
</dbReference>
<dbReference type="PROSITE" id="PS51892">
    <property type="entry name" value="SUBTILASE"/>
    <property type="match status" value="1"/>
</dbReference>
<dbReference type="PROSITE" id="PS00138">
    <property type="entry name" value="SUBTILASE_SER"/>
    <property type="match status" value="1"/>
</dbReference>
<gene>
    <name type="primary">SUB4</name>
</gene>
<protein>
    <recommendedName>
        <fullName>Subtilisin-like protease 4</fullName>
        <ecNumber>3.4.21.-</ecNumber>
    </recommendedName>
</protein>
<feature type="signal peptide" evidence="2">
    <location>
        <begin position="1"/>
        <end position="19"/>
    </location>
</feature>
<feature type="propeptide" id="PRO_0000380786" evidence="1">
    <location>
        <begin position="20"/>
        <end position="118"/>
    </location>
</feature>
<feature type="chain" id="PRO_0000380787" description="Subtilisin-like protease 4">
    <location>
        <begin position="119"/>
        <end position="399"/>
    </location>
</feature>
<feature type="domain" description="Inhibitor I9" evidence="2">
    <location>
        <begin position="38"/>
        <end position="117"/>
    </location>
</feature>
<feature type="domain" description="Peptidase S8" evidence="3">
    <location>
        <begin position="128"/>
        <end position="399"/>
    </location>
</feature>
<feature type="active site" description="Charge relay system" evidence="3">
    <location>
        <position position="160"/>
    </location>
</feature>
<feature type="active site" description="Charge relay system" evidence="3">
    <location>
        <position position="191"/>
    </location>
</feature>
<feature type="active site" description="Charge relay system" evidence="3">
    <location>
        <position position="346"/>
    </location>
</feature>
<feature type="glycosylation site" description="N-linked (GlcNAc...) asparagine" evidence="2">
    <location>
        <position position="102"/>
    </location>
</feature>
<feature type="glycosylation site" description="N-linked (GlcNAc...) asparagine" evidence="2">
    <location>
        <position position="252"/>
    </location>
</feature>
<feature type="glycosylation site" description="N-linked (GlcNAc...) asparagine" evidence="2">
    <location>
        <position position="308"/>
    </location>
</feature>
<feature type="glycosylation site" description="N-linked (GlcNAc...) asparagine" evidence="2">
    <location>
        <position position="395"/>
    </location>
</feature>
<comment type="function">
    <text evidence="1">Secreted subtilisin-like serine protease with keratinolytic activity that contributes to pathogenicity.</text>
</comment>
<comment type="subcellular location">
    <subcellularLocation>
        <location evidence="1">Secreted</location>
    </subcellularLocation>
</comment>
<comment type="similarity">
    <text evidence="4">Belongs to the peptidase S8 family.</text>
</comment>
<sequence length="399" mass="42149">MVCLKTLSVFLAAFAAADARAVFKTQGHKNSEMIPDNYIVVMKDGVSQDDFKAHISSVASIHSTNKAKRGTNTQGMKREFDIMNWRGYHGHFDRDTLEEILNDSKVDYVEQDQVVRISGLVTQRSAPSWGLGRVSHRQAGSRDYVFDDSAGRGVTIYGVDTGIDINHQDFRGRARWGTNTADRDNADRHGHGTHTASTFAGTAYGIAKNANIVAVKVLGSDGSGSTSGIIAGINYCVQDAQQRGILGKAAMNLSLGGGFSQANNDAVTRAQNAGIFVAVAAGNDNRDARNYSPASAPAVCTVASSTINDSKSSFSNWGPVVDIYAPGSDIIAARPGGGSTTMSGTSMASPHVAGMGAYMIGMGADPRQVCDRLKQLATAAIRNPGSSTTNRLLYNGSGQ</sequence>
<reference key="1">
    <citation type="journal article" date="2004" name="Gene">
        <title>Secreted subtilisin gene family in Trichophyton rubrum.</title>
        <authorList>
            <person name="Jousson O."/>
            <person name="Lechenne B."/>
            <person name="Bontems O."/>
            <person name="Mignon B."/>
            <person name="Reichard U."/>
            <person name="Barblan J."/>
            <person name="Quadroni M."/>
            <person name="Monod M."/>
        </authorList>
    </citation>
    <scope>NUCLEOTIDE SEQUENCE [GENOMIC DNA]</scope>
</reference>
<accession>Q64K33</accession>
<organism>
    <name type="scientific">Arthroderma benhamiae</name>
    <name type="common">Trichophyton mentagrophytes</name>
    <dbReference type="NCBI Taxonomy" id="63400"/>
    <lineage>
        <taxon>Eukaryota</taxon>
        <taxon>Fungi</taxon>
        <taxon>Dikarya</taxon>
        <taxon>Ascomycota</taxon>
        <taxon>Pezizomycotina</taxon>
        <taxon>Eurotiomycetes</taxon>
        <taxon>Eurotiomycetidae</taxon>
        <taxon>Onygenales</taxon>
        <taxon>Arthrodermataceae</taxon>
        <taxon>Trichophyton</taxon>
    </lineage>
</organism>
<evidence type="ECO:0000250" key="1"/>
<evidence type="ECO:0000255" key="2"/>
<evidence type="ECO:0000255" key="3">
    <source>
        <dbReference type="PROSITE-ProRule" id="PRU01240"/>
    </source>
</evidence>
<evidence type="ECO:0000305" key="4"/>
<name>SUB4_ARTBE</name>
<keyword id="KW-0325">Glycoprotein</keyword>
<keyword id="KW-0378">Hydrolase</keyword>
<keyword id="KW-0645">Protease</keyword>
<keyword id="KW-0964">Secreted</keyword>
<keyword id="KW-0720">Serine protease</keyword>
<keyword id="KW-0732">Signal</keyword>
<keyword id="KW-0843">Virulence</keyword>
<keyword id="KW-0865">Zymogen</keyword>